<feature type="chain" id="PRO_0000266088" description="CTP synthase">
    <location>
        <begin position="1"/>
        <end position="543"/>
    </location>
</feature>
<feature type="domain" description="Glutamine amidotransferase type-1" evidence="1">
    <location>
        <begin position="292"/>
        <end position="543"/>
    </location>
</feature>
<feature type="region of interest" description="Amidoligase domain" evidence="1">
    <location>
        <begin position="1"/>
        <end position="267"/>
    </location>
</feature>
<feature type="active site" description="Nucleophile; for glutamine hydrolysis" evidence="1">
    <location>
        <position position="381"/>
    </location>
</feature>
<feature type="active site" evidence="1">
    <location>
        <position position="516"/>
    </location>
</feature>
<feature type="active site" evidence="1">
    <location>
        <position position="518"/>
    </location>
</feature>
<feature type="binding site" evidence="1">
    <location>
        <position position="15"/>
    </location>
    <ligand>
        <name>CTP</name>
        <dbReference type="ChEBI" id="CHEBI:37563"/>
        <note>allosteric inhibitor</note>
    </ligand>
</feature>
<feature type="binding site" evidence="1">
    <location>
        <position position="15"/>
    </location>
    <ligand>
        <name>UTP</name>
        <dbReference type="ChEBI" id="CHEBI:46398"/>
    </ligand>
</feature>
<feature type="binding site" evidence="1">
    <location>
        <begin position="16"/>
        <end position="21"/>
    </location>
    <ligand>
        <name>ATP</name>
        <dbReference type="ChEBI" id="CHEBI:30616"/>
    </ligand>
</feature>
<feature type="binding site" evidence="1">
    <location>
        <position position="73"/>
    </location>
    <ligand>
        <name>ATP</name>
        <dbReference type="ChEBI" id="CHEBI:30616"/>
    </ligand>
</feature>
<feature type="binding site" evidence="1">
    <location>
        <position position="73"/>
    </location>
    <ligand>
        <name>Mg(2+)</name>
        <dbReference type="ChEBI" id="CHEBI:18420"/>
    </ligand>
</feature>
<feature type="binding site" evidence="1">
    <location>
        <position position="141"/>
    </location>
    <ligand>
        <name>Mg(2+)</name>
        <dbReference type="ChEBI" id="CHEBI:18420"/>
    </ligand>
</feature>
<feature type="binding site" evidence="1">
    <location>
        <begin position="148"/>
        <end position="150"/>
    </location>
    <ligand>
        <name>CTP</name>
        <dbReference type="ChEBI" id="CHEBI:37563"/>
        <note>allosteric inhibitor</note>
    </ligand>
</feature>
<feature type="binding site" evidence="1">
    <location>
        <begin position="188"/>
        <end position="193"/>
    </location>
    <ligand>
        <name>CTP</name>
        <dbReference type="ChEBI" id="CHEBI:37563"/>
        <note>allosteric inhibitor</note>
    </ligand>
</feature>
<feature type="binding site" evidence="1">
    <location>
        <begin position="188"/>
        <end position="193"/>
    </location>
    <ligand>
        <name>UTP</name>
        <dbReference type="ChEBI" id="CHEBI:46398"/>
    </ligand>
</feature>
<feature type="binding site" evidence="1">
    <location>
        <position position="224"/>
    </location>
    <ligand>
        <name>CTP</name>
        <dbReference type="ChEBI" id="CHEBI:37563"/>
        <note>allosteric inhibitor</note>
    </ligand>
</feature>
<feature type="binding site" evidence="1">
    <location>
        <position position="224"/>
    </location>
    <ligand>
        <name>UTP</name>
        <dbReference type="ChEBI" id="CHEBI:46398"/>
    </ligand>
</feature>
<feature type="binding site" evidence="1">
    <location>
        <position position="354"/>
    </location>
    <ligand>
        <name>L-glutamine</name>
        <dbReference type="ChEBI" id="CHEBI:58359"/>
    </ligand>
</feature>
<feature type="binding site" evidence="1">
    <location>
        <begin position="382"/>
        <end position="385"/>
    </location>
    <ligand>
        <name>L-glutamine</name>
        <dbReference type="ChEBI" id="CHEBI:58359"/>
    </ligand>
</feature>
<feature type="binding site" evidence="1">
    <location>
        <position position="405"/>
    </location>
    <ligand>
        <name>L-glutamine</name>
        <dbReference type="ChEBI" id="CHEBI:58359"/>
    </ligand>
</feature>
<feature type="binding site" evidence="1">
    <location>
        <position position="473"/>
    </location>
    <ligand>
        <name>L-glutamine</name>
        <dbReference type="ChEBI" id="CHEBI:58359"/>
    </ligand>
</feature>
<evidence type="ECO:0000255" key="1">
    <source>
        <dbReference type="HAMAP-Rule" id="MF_01227"/>
    </source>
</evidence>
<dbReference type="EC" id="6.3.4.2" evidence="1"/>
<dbReference type="EMBL" id="CP000025">
    <property type="protein sequence ID" value="AAW34522.1"/>
    <property type="molecule type" value="Genomic_DNA"/>
</dbReference>
<dbReference type="RefSeq" id="WP_002855601.1">
    <property type="nucleotide sequence ID" value="NC_003912.7"/>
</dbReference>
<dbReference type="SMR" id="Q5HXD1"/>
<dbReference type="MEROPS" id="C26.964"/>
<dbReference type="KEGG" id="cjr:CJE0027"/>
<dbReference type="HOGENOM" id="CLU_011675_5_0_7"/>
<dbReference type="UniPathway" id="UPA00159">
    <property type="reaction ID" value="UER00277"/>
</dbReference>
<dbReference type="GO" id="GO:0005829">
    <property type="term" value="C:cytosol"/>
    <property type="evidence" value="ECO:0007669"/>
    <property type="project" value="TreeGrafter"/>
</dbReference>
<dbReference type="GO" id="GO:0005524">
    <property type="term" value="F:ATP binding"/>
    <property type="evidence" value="ECO:0007669"/>
    <property type="project" value="UniProtKB-KW"/>
</dbReference>
<dbReference type="GO" id="GO:0003883">
    <property type="term" value="F:CTP synthase activity"/>
    <property type="evidence" value="ECO:0007669"/>
    <property type="project" value="UniProtKB-UniRule"/>
</dbReference>
<dbReference type="GO" id="GO:0004359">
    <property type="term" value="F:glutaminase activity"/>
    <property type="evidence" value="ECO:0007669"/>
    <property type="project" value="RHEA"/>
</dbReference>
<dbReference type="GO" id="GO:0042802">
    <property type="term" value="F:identical protein binding"/>
    <property type="evidence" value="ECO:0007669"/>
    <property type="project" value="TreeGrafter"/>
</dbReference>
<dbReference type="GO" id="GO:0046872">
    <property type="term" value="F:metal ion binding"/>
    <property type="evidence" value="ECO:0007669"/>
    <property type="project" value="UniProtKB-KW"/>
</dbReference>
<dbReference type="GO" id="GO:0044210">
    <property type="term" value="P:'de novo' CTP biosynthetic process"/>
    <property type="evidence" value="ECO:0007669"/>
    <property type="project" value="UniProtKB-UniRule"/>
</dbReference>
<dbReference type="GO" id="GO:0019856">
    <property type="term" value="P:pyrimidine nucleobase biosynthetic process"/>
    <property type="evidence" value="ECO:0007669"/>
    <property type="project" value="TreeGrafter"/>
</dbReference>
<dbReference type="CDD" id="cd03113">
    <property type="entry name" value="CTPS_N"/>
    <property type="match status" value="1"/>
</dbReference>
<dbReference type="CDD" id="cd01746">
    <property type="entry name" value="GATase1_CTP_Synthase"/>
    <property type="match status" value="1"/>
</dbReference>
<dbReference type="FunFam" id="3.40.50.300:FF:000009">
    <property type="entry name" value="CTP synthase"/>
    <property type="match status" value="1"/>
</dbReference>
<dbReference type="FunFam" id="3.40.50.880:FF:000002">
    <property type="entry name" value="CTP synthase"/>
    <property type="match status" value="1"/>
</dbReference>
<dbReference type="Gene3D" id="3.40.50.880">
    <property type="match status" value="1"/>
</dbReference>
<dbReference type="Gene3D" id="3.40.50.300">
    <property type="entry name" value="P-loop containing nucleotide triphosphate hydrolases"/>
    <property type="match status" value="1"/>
</dbReference>
<dbReference type="HAMAP" id="MF_01227">
    <property type="entry name" value="PyrG"/>
    <property type="match status" value="1"/>
</dbReference>
<dbReference type="InterPro" id="IPR029062">
    <property type="entry name" value="Class_I_gatase-like"/>
</dbReference>
<dbReference type="InterPro" id="IPR004468">
    <property type="entry name" value="CTP_synthase"/>
</dbReference>
<dbReference type="InterPro" id="IPR017456">
    <property type="entry name" value="CTP_synthase_N"/>
</dbReference>
<dbReference type="InterPro" id="IPR017926">
    <property type="entry name" value="GATASE"/>
</dbReference>
<dbReference type="InterPro" id="IPR033828">
    <property type="entry name" value="GATase1_CTP_Synthase"/>
</dbReference>
<dbReference type="InterPro" id="IPR027417">
    <property type="entry name" value="P-loop_NTPase"/>
</dbReference>
<dbReference type="NCBIfam" id="NF003792">
    <property type="entry name" value="PRK05380.1"/>
    <property type="match status" value="1"/>
</dbReference>
<dbReference type="NCBIfam" id="TIGR00337">
    <property type="entry name" value="PyrG"/>
    <property type="match status" value="1"/>
</dbReference>
<dbReference type="PANTHER" id="PTHR11550">
    <property type="entry name" value="CTP SYNTHASE"/>
    <property type="match status" value="1"/>
</dbReference>
<dbReference type="PANTHER" id="PTHR11550:SF0">
    <property type="entry name" value="CTP SYNTHASE-RELATED"/>
    <property type="match status" value="1"/>
</dbReference>
<dbReference type="Pfam" id="PF06418">
    <property type="entry name" value="CTP_synth_N"/>
    <property type="match status" value="1"/>
</dbReference>
<dbReference type="Pfam" id="PF00117">
    <property type="entry name" value="GATase"/>
    <property type="match status" value="1"/>
</dbReference>
<dbReference type="SUPFAM" id="SSF52317">
    <property type="entry name" value="Class I glutamine amidotransferase-like"/>
    <property type="match status" value="1"/>
</dbReference>
<dbReference type="SUPFAM" id="SSF52540">
    <property type="entry name" value="P-loop containing nucleoside triphosphate hydrolases"/>
    <property type="match status" value="1"/>
</dbReference>
<dbReference type="PROSITE" id="PS51273">
    <property type="entry name" value="GATASE_TYPE_1"/>
    <property type="match status" value="1"/>
</dbReference>
<gene>
    <name evidence="1" type="primary">pyrG</name>
    <name type="ordered locus">CJE0027</name>
</gene>
<organism>
    <name type="scientific">Campylobacter jejuni (strain RM1221)</name>
    <dbReference type="NCBI Taxonomy" id="195099"/>
    <lineage>
        <taxon>Bacteria</taxon>
        <taxon>Pseudomonadati</taxon>
        <taxon>Campylobacterota</taxon>
        <taxon>Epsilonproteobacteria</taxon>
        <taxon>Campylobacterales</taxon>
        <taxon>Campylobacteraceae</taxon>
        <taxon>Campylobacter</taxon>
    </lineage>
</organism>
<comment type="function">
    <text evidence="1">Catalyzes the ATP-dependent amination of UTP to CTP with either L-glutamine or ammonia as the source of nitrogen. Regulates intracellular CTP levels through interactions with the four ribonucleotide triphosphates.</text>
</comment>
<comment type="catalytic activity">
    <reaction evidence="1">
        <text>UTP + L-glutamine + ATP + H2O = CTP + L-glutamate + ADP + phosphate + 2 H(+)</text>
        <dbReference type="Rhea" id="RHEA:26426"/>
        <dbReference type="ChEBI" id="CHEBI:15377"/>
        <dbReference type="ChEBI" id="CHEBI:15378"/>
        <dbReference type="ChEBI" id="CHEBI:29985"/>
        <dbReference type="ChEBI" id="CHEBI:30616"/>
        <dbReference type="ChEBI" id="CHEBI:37563"/>
        <dbReference type="ChEBI" id="CHEBI:43474"/>
        <dbReference type="ChEBI" id="CHEBI:46398"/>
        <dbReference type="ChEBI" id="CHEBI:58359"/>
        <dbReference type="ChEBI" id="CHEBI:456216"/>
        <dbReference type="EC" id="6.3.4.2"/>
    </reaction>
</comment>
<comment type="catalytic activity">
    <reaction evidence="1">
        <text>L-glutamine + H2O = L-glutamate + NH4(+)</text>
        <dbReference type="Rhea" id="RHEA:15889"/>
        <dbReference type="ChEBI" id="CHEBI:15377"/>
        <dbReference type="ChEBI" id="CHEBI:28938"/>
        <dbReference type="ChEBI" id="CHEBI:29985"/>
        <dbReference type="ChEBI" id="CHEBI:58359"/>
    </reaction>
</comment>
<comment type="catalytic activity">
    <reaction evidence="1">
        <text>UTP + NH4(+) + ATP = CTP + ADP + phosphate + 2 H(+)</text>
        <dbReference type="Rhea" id="RHEA:16597"/>
        <dbReference type="ChEBI" id="CHEBI:15378"/>
        <dbReference type="ChEBI" id="CHEBI:28938"/>
        <dbReference type="ChEBI" id="CHEBI:30616"/>
        <dbReference type="ChEBI" id="CHEBI:37563"/>
        <dbReference type="ChEBI" id="CHEBI:43474"/>
        <dbReference type="ChEBI" id="CHEBI:46398"/>
        <dbReference type="ChEBI" id="CHEBI:456216"/>
    </reaction>
</comment>
<comment type="activity regulation">
    <text evidence="1">Allosterically activated by GTP, when glutamine is the substrate; GTP has no effect on the reaction when ammonia is the substrate. The allosteric effector GTP functions by stabilizing the protein conformation that binds the tetrahedral intermediate(s) formed during glutamine hydrolysis. Inhibited by the product CTP, via allosteric rather than competitive inhibition.</text>
</comment>
<comment type="pathway">
    <text evidence="1">Pyrimidine metabolism; CTP biosynthesis via de novo pathway; CTP from UDP: step 2/2.</text>
</comment>
<comment type="subunit">
    <text evidence="1">Homotetramer.</text>
</comment>
<comment type="miscellaneous">
    <text evidence="1">CTPSs have evolved a hybrid strategy for distinguishing between UTP and CTP. The overlapping regions of the product feedback inhibitory and substrate sites recognize a common feature in both compounds, the triphosphate moiety. To differentiate isosteric substrate and product pyrimidine rings, an additional pocket far from the expected kinase/ligase catalytic site, specifically recognizes the cytosine and ribose portions of the product inhibitor.</text>
</comment>
<comment type="similarity">
    <text evidence="1">Belongs to the CTP synthase family.</text>
</comment>
<keyword id="KW-0067">ATP-binding</keyword>
<keyword id="KW-0315">Glutamine amidotransferase</keyword>
<keyword id="KW-0436">Ligase</keyword>
<keyword id="KW-0460">Magnesium</keyword>
<keyword id="KW-0479">Metal-binding</keyword>
<keyword id="KW-0547">Nucleotide-binding</keyword>
<keyword id="KW-0665">Pyrimidine biosynthesis</keyword>
<proteinExistence type="inferred from homology"/>
<name>PYRG_CAMJR</name>
<accession>Q5HXD1</accession>
<reference key="1">
    <citation type="journal article" date="2005" name="PLoS Biol.">
        <title>Major structural differences and novel potential virulence mechanisms from the genomes of multiple Campylobacter species.</title>
        <authorList>
            <person name="Fouts D.E."/>
            <person name="Mongodin E.F."/>
            <person name="Mandrell R.E."/>
            <person name="Miller W.G."/>
            <person name="Rasko D.A."/>
            <person name="Ravel J."/>
            <person name="Brinkac L.M."/>
            <person name="DeBoy R.T."/>
            <person name="Parker C.T."/>
            <person name="Daugherty S.C."/>
            <person name="Dodson R.J."/>
            <person name="Durkin A.S."/>
            <person name="Madupu R."/>
            <person name="Sullivan S.A."/>
            <person name="Shetty J.U."/>
            <person name="Ayodeji M.A."/>
            <person name="Shvartsbeyn A."/>
            <person name="Schatz M.C."/>
            <person name="Badger J.H."/>
            <person name="Fraser C.M."/>
            <person name="Nelson K.E."/>
        </authorList>
    </citation>
    <scope>NUCLEOTIDE SEQUENCE [LARGE SCALE GENOMIC DNA]</scope>
    <source>
        <strain>RM1221</strain>
    </source>
</reference>
<protein>
    <recommendedName>
        <fullName evidence="1">CTP synthase</fullName>
        <ecNumber evidence="1">6.3.4.2</ecNumber>
    </recommendedName>
    <alternativeName>
        <fullName evidence="1">Cytidine 5'-triphosphate synthase</fullName>
    </alternativeName>
    <alternativeName>
        <fullName evidence="1">Cytidine triphosphate synthetase</fullName>
        <shortName evidence="1">CTP synthetase</shortName>
        <shortName evidence="1">CTPS</shortName>
    </alternativeName>
    <alternativeName>
        <fullName evidence="1">UTP--ammonia ligase</fullName>
    </alternativeName>
</protein>
<sequence>MKQTKYIFVTGGVLSSLGKGIAAASIATLLKNSGLKVSILKADPYINVDPGTMSPFEHGEVFVTDDGAETDLDLGHYERFLDESLSQDNNFTTGRVYQSVIEKERRGEYLGKTIQVIPHIVGEIKDRIKKAGEGKDILIVEIGGTVGDIEGLPFLEAIRALRLEVGKNNAMNIHLTLVPFIKAAGELKTKPTQHSVGELRRIGISPDMIICRSEKALDRDLKDKIAISCGVEKNCVIESVDAASIYQIPLNFLKQDILSPIAEILDLKNLKPNMENWDSLVKRVIAPSNEVKIAFVGKYVDLKESYKSLTEAIIHAGAALDTKVELKWVDSEKLENMESSEVFKDVSGILVAGGFGYRGVEGKIKAIQYARENKIPFLGICLGMQLALVEFARNVLKLKDANSSEFNEKCQNPVVYLIDEFMDTNGEKQIRTAKTPLGGTMRLGAYKCDIKEKSLLAKVYNEVKSVKERHRHRYEANPKYRADFEKHGLIVSGESKGLIEAVELNCHPFFLAVQFHPEFTSRLEHVNPVICSFIKAAINYEDN</sequence>